<reference key="1">
    <citation type="journal article" date="2010" name="J. Bacteriol.">
        <title>Genome sequence of the deep-rooted Yersinia pestis strain Angola reveals new insights into the evolution and pangenome of the plague bacterium.</title>
        <authorList>
            <person name="Eppinger M."/>
            <person name="Worsham P.L."/>
            <person name="Nikolich M.P."/>
            <person name="Riley D.R."/>
            <person name="Sebastian Y."/>
            <person name="Mou S."/>
            <person name="Achtman M."/>
            <person name="Lindler L.E."/>
            <person name="Ravel J."/>
        </authorList>
    </citation>
    <scope>NUCLEOTIDE SEQUENCE [LARGE SCALE GENOMIC DNA]</scope>
    <source>
        <strain>Angola</strain>
    </source>
</reference>
<proteinExistence type="inferred from homology"/>
<dbReference type="EC" id="2.7.7.4" evidence="1"/>
<dbReference type="EMBL" id="CP000901">
    <property type="protein sequence ID" value="ABX87593.1"/>
    <property type="molecule type" value="Genomic_DNA"/>
</dbReference>
<dbReference type="RefSeq" id="WP_002209386.1">
    <property type="nucleotide sequence ID" value="NZ_CP009935.1"/>
</dbReference>
<dbReference type="SMR" id="A9R1C3"/>
<dbReference type="GeneID" id="57975343"/>
<dbReference type="KEGG" id="ypg:YpAngola_A0969"/>
<dbReference type="PATRIC" id="fig|349746.12.peg.1917"/>
<dbReference type="UniPathway" id="UPA00140">
    <property type="reaction ID" value="UER00204"/>
</dbReference>
<dbReference type="GO" id="GO:0005524">
    <property type="term" value="F:ATP binding"/>
    <property type="evidence" value="ECO:0007669"/>
    <property type="project" value="UniProtKB-KW"/>
</dbReference>
<dbReference type="GO" id="GO:0004781">
    <property type="term" value="F:sulfate adenylyltransferase (ATP) activity"/>
    <property type="evidence" value="ECO:0007669"/>
    <property type="project" value="UniProtKB-UniRule"/>
</dbReference>
<dbReference type="GO" id="GO:0070814">
    <property type="term" value="P:hydrogen sulfide biosynthetic process"/>
    <property type="evidence" value="ECO:0007669"/>
    <property type="project" value="UniProtKB-UniRule"/>
</dbReference>
<dbReference type="GO" id="GO:0000103">
    <property type="term" value="P:sulfate assimilation"/>
    <property type="evidence" value="ECO:0007669"/>
    <property type="project" value="UniProtKB-UniRule"/>
</dbReference>
<dbReference type="CDD" id="cd23946">
    <property type="entry name" value="Sulfate_adenylyltransferase_2"/>
    <property type="match status" value="1"/>
</dbReference>
<dbReference type="FunFam" id="3.40.50.620:FF:000002">
    <property type="entry name" value="Sulfate adenylyltransferase subunit 2"/>
    <property type="match status" value="1"/>
</dbReference>
<dbReference type="Gene3D" id="3.40.50.620">
    <property type="entry name" value="HUPs"/>
    <property type="match status" value="1"/>
</dbReference>
<dbReference type="HAMAP" id="MF_00064">
    <property type="entry name" value="Sulf_adenylyltr_sub2"/>
    <property type="match status" value="1"/>
</dbReference>
<dbReference type="InterPro" id="IPR002500">
    <property type="entry name" value="PAPS_reduct_dom"/>
</dbReference>
<dbReference type="InterPro" id="IPR014729">
    <property type="entry name" value="Rossmann-like_a/b/a_fold"/>
</dbReference>
<dbReference type="InterPro" id="IPR011784">
    <property type="entry name" value="SO4_adenylTrfase_ssu"/>
</dbReference>
<dbReference type="InterPro" id="IPR050128">
    <property type="entry name" value="Sulfate_adenylyltrnsfr_sub2"/>
</dbReference>
<dbReference type="NCBIfam" id="TIGR02039">
    <property type="entry name" value="CysD"/>
    <property type="match status" value="1"/>
</dbReference>
<dbReference type="NCBIfam" id="NF003587">
    <property type="entry name" value="PRK05253.1"/>
    <property type="match status" value="1"/>
</dbReference>
<dbReference type="NCBIfam" id="NF009214">
    <property type="entry name" value="PRK12563.1"/>
    <property type="match status" value="1"/>
</dbReference>
<dbReference type="PANTHER" id="PTHR43196">
    <property type="entry name" value="SULFATE ADENYLYLTRANSFERASE SUBUNIT 2"/>
    <property type="match status" value="1"/>
</dbReference>
<dbReference type="PANTHER" id="PTHR43196:SF1">
    <property type="entry name" value="SULFATE ADENYLYLTRANSFERASE SUBUNIT 2"/>
    <property type="match status" value="1"/>
</dbReference>
<dbReference type="Pfam" id="PF01507">
    <property type="entry name" value="PAPS_reduct"/>
    <property type="match status" value="1"/>
</dbReference>
<dbReference type="PIRSF" id="PIRSF002936">
    <property type="entry name" value="CysDAde_trans"/>
    <property type="match status" value="1"/>
</dbReference>
<dbReference type="SUPFAM" id="SSF52402">
    <property type="entry name" value="Adenine nucleotide alpha hydrolases-like"/>
    <property type="match status" value="1"/>
</dbReference>
<sequence length="302" mass="35187">MDEKRLTHLRQLEAESIHIIREVAAEFGNPVMLYSIGKDSSVMLHLARKAFFPGHLPFPLLHVDTGWKFREMYEFRDHTVKEFGCELLVHRNPEGVAMGINPFVHGSAKHTDIMKTEGLKQALNKYGFDAAFGGARRDEEKSRAKERIYSFRDRFHRWDPKNQRPELWHNYNGQINKGESIRVFPLSNWTELDIWQYIFLEKIEIVPLYLAKPRPVVERDGMLLMVDDDRIDLQPGEVIVQKKVRFRTLGCWPLTGAVESEAETLPAIIEEMLISTTSERQGRMIDRDQSGSMELKKRQGYF</sequence>
<organism>
    <name type="scientific">Yersinia pestis bv. Antiqua (strain Angola)</name>
    <dbReference type="NCBI Taxonomy" id="349746"/>
    <lineage>
        <taxon>Bacteria</taxon>
        <taxon>Pseudomonadati</taxon>
        <taxon>Pseudomonadota</taxon>
        <taxon>Gammaproteobacteria</taxon>
        <taxon>Enterobacterales</taxon>
        <taxon>Yersiniaceae</taxon>
        <taxon>Yersinia</taxon>
    </lineage>
</organism>
<name>CYSD_YERPG</name>
<keyword id="KW-0067">ATP-binding</keyword>
<keyword id="KW-0547">Nucleotide-binding</keyword>
<keyword id="KW-0548">Nucleotidyltransferase</keyword>
<keyword id="KW-0808">Transferase</keyword>
<evidence type="ECO:0000255" key="1">
    <source>
        <dbReference type="HAMAP-Rule" id="MF_00064"/>
    </source>
</evidence>
<feature type="chain" id="PRO_1000092233" description="Sulfate adenylyltransferase subunit 2">
    <location>
        <begin position="1"/>
        <end position="302"/>
    </location>
</feature>
<gene>
    <name evidence="1" type="primary">cysD</name>
    <name type="ordered locus">YpAngola_A0969</name>
</gene>
<accession>A9R1C3</accession>
<comment type="function">
    <text evidence="1">With CysN forms the ATP sulfurylase (ATPS) that catalyzes the adenylation of sulfate producing adenosine 5'-phosphosulfate (APS) and diphosphate, the first enzymatic step in sulfur assimilation pathway. APS synthesis involves the formation of a high-energy phosphoric-sulfuric acid anhydride bond driven by GTP hydrolysis by CysN coupled to ATP hydrolysis by CysD.</text>
</comment>
<comment type="catalytic activity">
    <reaction evidence="1">
        <text>sulfate + ATP + H(+) = adenosine 5'-phosphosulfate + diphosphate</text>
        <dbReference type="Rhea" id="RHEA:18133"/>
        <dbReference type="ChEBI" id="CHEBI:15378"/>
        <dbReference type="ChEBI" id="CHEBI:16189"/>
        <dbReference type="ChEBI" id="CHEBI:30616"/>
        <dbReference type="ChEBI" id="CHEBI:33019"/>
        <dbReference type="ChEBI" id="CHEBI:58243"/>
        <dbReference type="EC" id="2.7.7.4"/>
    </reaction>
</comment>
<comment type="pathway">
    <text evidence="1">Sulfur metabolism; hydrogen sulfide biosynthesis; sulfite from sulfate: step 1/3.</text>
</comment>
<comment type="subunit">
    <text evidence="1">Heterodimer composed of CysD, the smaller subunit, and CysN.</text>
</comment>
<comment type="similarity">
    <text evidence="1">Belongs to the PAPS reductase family. CysD subfamily.</text>
</comment>
<protein>
    <recommendedName>
        <fullName evidence="1">Sulfate adenylyltransferase subunit 2</fullName>
        <ecNumber evidence="1">2.7.7.4</ecNumber>
    </recommendedName>
    <alternativeName>
        <fullName evidence="1">ATP-sulfurylase small subunit</fullName>
    </alternativeName>
    <alternativeName>
        <fullName evidence="1">Sulfate adenylate transferase</fullName>
        <shortName evidence="1">SAT</shortName>
    </alternativeName>
</protein>